<keyword id="KW-0963">Cytoplasm</keyword>
<keyword id="KW-0342">GTP-binding</keyword>
<keyword id="KW-0396">Initiation factor</keyword>
<keyword id="KW-0547">Nucleotide-binding</keyword>
<keyword id="KW-0648">Protein biosynthesis</keyword>
<reference key="1">
    <citation type="submission" date="2009-03" db="EMBL/GenBank/DDBJ databases">
        <title>Comparison of the complete genome sequences of Rhodococcus erythropolis PR4 and Rhodococcus opacus B4.</title>
        <authorList>
            <person name="Takarada H."/>
            <person name="Sekine M."/>
            <person name="Hosoyama A."/>
            <person name="Yamada R."/>
            <person name="Fujisawa T."/>
            <person name="Omata S."/>
            <person name="Shimizu A."/>
            <person name="Tsukatani N."/>
            <person name="Tanikawa S."/>
            <person name="Fujita N."/>
            <person name="Harayama S."/>
        </authorList>
    </citation>
    <scope>NUCLEOTIDE SEQUENCE [LARGE SCALE GENOMIC DNA]</scope>
    <source>
        <strain>B4</strain>
    </source>
</reference>
<dbReference type="EMBL" id="AP011115">
    <property type="protein sequence ID" value="BAH54930.1"/>
    <property type="molecule type" value="Genomic_DNA"/>
</dbReference>
<dbReference type="RefSeq" id="WP_015890368.1">
    <property type="nucleotide sequence ID" value="NC_012522.1"/>
</dbReference>
<dbReference type="SMR" id="C1B313"/>
<dbReference type="STRING" id="632772.ROP_66830"/>
<dbReference type="KEGG" id="rop:ROP_66830"/>
<dbReference type="PATRIC" id="fig|632772.20.peg.6969"/>
<dbReference type="HOGENOM" id="CLU_006301_9_4_11"/>
<dbReference type="OrthoDB" id="9811804at2"/>
<dbReference type="Proteomes" id="UP000002212">
    <property type="component" value="Chromosome"/>
</dbReference>
<dbReference type="GO" id="GO:0005829">
    <property type="term" value="C:cytosol"/>
    <property type="evidence" value="ECO:0007669"/>
    <property type="project" value="TreeGrafter"/>
</dbReference>
<dbReference type="GO" id="GO:0005525">
    <property type="term" value="F:GTP binding"/>
    <property type="evidence" value="ECO:0007669"/>
    <property type="project" value="UniProtKB-KW"/>
</dbReference>
<dbReference type="GO" id="GO:0003924">
    <property type="term" value="F:GTPase activity"/>
    <property type="evidence" value="ECO:0007669"/>
    <property type="project" value="UniProtKB-UniRule"/>
</dbReference>
<dbReference type="GO" id="GO:0003743">
    <property type="term" value="F:translation initiation factor activity"/>
    <property type="evidence" value="ECO:0007669"/>
    <property type="project" value="UniProtKB-UniRule"/>
</dbReference>
<dbReference type="CDD" id="cd01887">
    <property type="entry name" value="IF2_eIF5B"/>
    <property type="match status" value="1"/>
</dbReference>
<dbReference type="CDD" id="cd03702">
    <property type="entry name" value="IF2_mtIF2_II"/>
    <property type="match status" value="1"/>
</dbReference>
<dbReference type="CDD" id="cd03692">
    <property type="entry name" value="mtIF2_IVc"/>
    <property type="match status" value="1"/>
</dbReference>
<dbReference type="FunFam" id="1.10.10.2480:FF:000003">
    <property type="entry name" value="Translation initiation factor IF-2"/>
    <property type="match status" value="1"/>
</dbReference>
<dbReference type="FunFam" id="2.40.30.10:FF:000007">
    <property type="entry name" value="Translation initiation factor IF-2"/>
    <property type="match status" value="1"/>
</dbReference>
<dbReference type="FunFam" id="2.40.30.10:FF:000008">
    <property type="entry name" value="Translation initiation factor IF-2"/>
    <property type="match status" value="1"/>
</dbReference>
<dbReference type="FunFam" id="3.40.50.10050:FF:000001">
    <property type="entry name" value="Translation initiation factor IF-2"/>
    <property type="match status" value="1"/>
</dbReference>
<dbReference type="FunFam" id="3.40.50.300:FF:000019">
    <property type="entry name" value="Translation initiation factor IF-2"/>
    <property type="match status" value="1"/>
</dbReference>
<dbReference type="Gene3D" id="1.10.10.2480">
    <property type="match status" value="1"/>
</dbReference>
<dbReference type="Gene3D" id="3.40.50.300">
    <property type="entry name" value="P-loop containing nucleotide triphosphate hydrolases"/>
    <property type="match status" value="1"/>
</dbReference>
<dbReference type="Gene3D" id="2.40.30.10">
    <property type="entry name" value="Translation factors"/>
    <property type="match status" value="2"/>
</dbReference>
<dbReference type="Gene3D" id="3.40.50.10050">
    <property type="entry name" value="Translation initiation factor IF- 2, domain 3"/>
    <property type="match status" value="1"/>
</dbReference>
<dbReference type="HAMAP" id="MF_00100_B">
    <property type="entry name" value="IF_2_B"/>
    <property type="match status" value="1"/>
</dbReference>
<dbReference type="InterPro" id="IPR053905">
    <property type="entry name" value="EF-G-like_DII"/>
</dbReference>
<dbReference type="InterPro" id="IPR004161">
    <property type="entry name" value="EFTu-like_2"/>
</dbReference>
<dbReference type="InterPro" id="IPR044145">
    <property type="entry name" value="IF2_II"/>
</dbReference>
<dbReference type="InterPro" id="IPR006847">
    <property type="entry name" value="IF2_N"/>
</dbReference>
<dbReference type="InterPro" id="IPR027417">
    <property type="entry name" value="P-loop_NTPase"/>
</dbReference>
<dbReference type="InterPro" id="IPR005225">
    <property type="entry name" value="Small_GTP-bd"/>
</dbReference>
<dbReference type="InterPro" id="IPR000795">
    <property type="entry name" value="T_Tr_GTP-bd_dom"/>
</dbReference>
<dbReference type="InterPro" id="IPR000178">
    <property type="entry name" value="TF_IF2_bacterial-like"/>
</dbReference>
<dbReference type="InterPro" id="IPR015760">
    <property type="entry name" value="TIF_IF2"/>
</dbReference>
<dbReference type="InterPro" id="IPR023115">
    <property type="entry name" value="TIF_IF2_dom3"/>
</dbReference>
<dbReference type="InterPro" id="IPR036925">
    <property type="entry name" value="TIF_IF2_dom3_sf"/>
</dbReference>
<dbReference type="InterPro" id="IPR009000">
    <property type="entry name" value="Transl_B-barrel_sf"/>
</dbReference>
<dbReference type="NCBIfam" id="TIGR00487">
    <property type="entry name" value="IF-2"/>
    <property type="match status" value="1"/>
</dbReference>
<dbReference type="NCBIfam" id="TIGR00231">
    <property type="entry name" value="small_GTP"/>
    <property type="match status" value="1"/>
</dbReference>
<dbReference type="PANTHER" id="PTHR43381:SF5">
    <property type="entry name" value="TR-TYPE G DOMAIN-CONTAINING PROTEIN"/>
    <property type="match status" value="1"/>
</dbReference>
<dbReference type="PANTHER" id="PTHR43381">
    <property type="entry name" value="TRANSLATION INITIATION FACTOR IF-2-RELATED"/>
    <property type="match status" value="1"/>
</dbReference>
<dbReference type="Pfam" id="PF22042">
    <property type="entry name" value="EF-G_D2"/>
    <property type="match status" value="1"/>
</dbReference>
<dbReference type="Pfam" id="PF00009">
    <property type="entry name" value="GTP_EFTU"/>
    <property type="match status" value="1"/>
</dbReference>
<dbReference type="Pfam" id="PF03144">
    <property type="entry name" value="GTP_EFTU_D2"/>
    <property type="match status" value="1"/>
</dbReference>
<dbReference type="Pfam" id="PF11987">
    <property type="entry name" value="IF-2"/>
    <property type="match status" value="1"/>
</dbReference>
<dbReference type="Pfam" id="PF04760">
    <property type="entry name" value="IF2_N"/>
    <property type="match status" value="2"/>
</dbReference>
<dbReference type="PRINTS" id="PR00315">
    <property type="entry name" value="ELONGATNFCT"/>
</dbReference>
<dbReference type="SUPFAM" id="SSF52156">
    <property type="entry name" value="Initiation factor IF2/eIF5b, domain 3"/>
    <property type="match status" value="1"/>
</dbReference>
<dbReference type="SUPFAM" id="SSF52540">
    <property type="entry name" value="P-loop containing nucleoside triphosphate hydrolases"/>
    <property type="match status" value="1"/>
</dbReference>
<dbReference type="SUPFAM" id="SSF50447">
    <property type="entry name" value="Translation proteins"/>
    <property type="match status" value="2"/>
</dbReference>
<dbReference type="PROSITE" id="PS51722">
    <property type="entry name" value="G_TR_2"/>
    <property type="match status" value="1"/>
</dbReference>
<organism>
    <name type="scientific">Rhodococcus opacus (strain B4)</name>
    <dbReference type="NCBI Taxonomy" id="632772"/>
    <lineage>
        <taxon>Bacteria</taxon>
        <taxon>Bacillati</taxon>
        <taxon>Actinomycetota</taxon>
        <taxon>Actinomycetes</taxon>
        <taxon>Mycobacteriales</taxon>
        <taxon>Nocardiaceae</taxon>
        <taxon>Rhodococcus</taxon>
    </lineage>
</organism>
<accession>C1B313</accession>
<evidence type="ECO:0000250" key="1"/>
<evidence type="ECO:0000255" key="2">
    <source>
        <dbReference type="HAMAP-Rule" id="MF_00100"/>
    </source>
</evidence>
<evidence type="ECO:0000256" key="3">
    <source>
        <dbReference type="SAM" id="MobiDB-lite"/>
    </source>
</evidence>
<proteinExistence type="inferred from homology"/>
<sequence length="974" mass="100063">MAGKARVHELAKELGVTSKELLATLKEQGEFVKSASSTVEAPVARRLRESFPSAKSADSAARPAAKPGAPAPSTPATSAKPGGPRPGPKPAAPAPAAPAAAAPAATPAAQAPAPAAPAASTATPAAPASNAPKPGRPTPAAPAPAAPAAPAAPAAASTPAAPSTGAKPGGPRPGPKPPRVGNNPYSSAPAERPAPRPAPGAPRPGAPRPAPGQGGPRPAPGQGGPRPAPGQGGPRPAPGQGGPRPAPGQGGPRPSPGSMPPRPNPGAMPARSARPAPGGRPGRPGGAPGGRPGGGGGGYRGGGAPGAGAGAPGGGAPAGGFRGRPGGGGRPGQRGAAAGAFGRPGGAPRRGRKSKRQKRQEYDSMQAPAVGGVRLPRGNGETIRLARGASLSDFAEKIDANPAALVQALFNLGEMVTATQSVNDETLELLGGEMNYVVQVVSPEDEDRELLDSFDLTYGEDEGGEEDLESRPPVVTVMGHVDHGKTRLLDTIRKANVREGEAGGITQHIGAYQVLTELDGNERLVTFIDTPGHEAFTAMRARGAKATDLAILVVAADDGVMPQTVEAINHAQAADVPIVVAVNKIDKEGANPDKIRQQLTEYGLVAEEYGGDTMFVDISAKQGTNIDALLEAVLLTADAALDLRANPDMDAQGVAIEAHLDRGRGPVATVLIQRGTLRVGDSIVAGDAYGRVRRMVDEHGDDVLEAMPSRPVQVVGFTSVPGAGDNLLVVDEDRIARQIADRRNARKRNALAAKSRKRISLEDLDSALKETSQLNLILKGDNSGTVEALEEALHGIEIDDEVQLRVIDRGVGGVTETNVNLAAASNAIIIGFNVRAEGKATELANREGVDIRYYSVIYQAIDEVEKALKGMLKPIYEEVELGKAEIRAMFRSSKVGNIAGCLVTSGTIRRNAKARLLRDNTVVAETVTISSLKREKEDAVEVREGYECGLTLTYSDIKVGDVIEAYELREKPRD</sequence>
<protein>
    <recommendedName>
        <fullName evidence="2">Translation initiation factor IF-2</fullName>
    </recommendedName>
</protein>
<name>IF2_RHOOB</name>
<feature type="chain" id="PRO_1000118771" description="Translation initiation factor IF-2">
    <location>
        <begin position="1"/>
        <end position="974"/>
    </location>
</feature>
<feature type="domain" description="tr-type G">
    <location>
        <begin position="470"/>
        <end position="641"/>
    </location>
</feature>
<feature type="region of interest" description="Disordered" evidence="3">
    <location>
        <begin position="31"/>
        <end position="376"/>
    </location>
</feature>
<feature type="region of interest" description="G1" evidence="1">
    <location>
        <begin position="479"/>
        <end position="486"/>
    </location>
</feature>
<feature type="region of interest" description="G2" evidence="1">
    <location>
        <begin position="504"/>
        <end position="508"/>
    </location>
</feature>
<feature type="region of interest" description="G3" evidence="1">
    <location>
        <begin position="529"/>
        <end position="532"/>
    </location>
</feature>
<feature type="region of interest" description="G4" evidence="1">
    <location>
        <begin position="583"/>
        <end position="586"/>
    </location>
</feature>
<feature type="region of interest" description="G5" evidence="1">
    <location>
        <begin position="619"/>
        <end position="621"/>
    </location>
</feature>
<feature type="compositionally biased region" description="Low complexity" evidence="3">
    <location>
        <begin position="52"/>
        <end position="68"/>
    </location>
</feature>
<feature type="compositionally biased region" description="Pro residues" evidence="3">
    <location>
        <begin position="83"/>
        <end position="96"/>
    </location>
</feature>
<feature type="compositionally biased region" description="Low complexity" evidence="3">
    <location>
        <begin position="97"/>
        <end position="133"/>
    </location>
</feature>
<feature type="compositionally biased region" description="Pro residues" evidence="3">
    <location>
        <begin position="134"/>
        <end position="147"/>
    </location>
</feature>
<feature type="compositionally biased region" description="Low complexity" evidence="3">
    <location>
        <begin position="148"/>
        <end position="166"/>
    </location>
</feature>
<feature type="compositionally biased region" description="Low complexity" evidence="3">
    <location>
        <begin position="179"/>
        <end position="191"/>
    </location>
</feature>
<feature type="compositionally biased region" description="Pro residues" evidence="3">
    <location>
        <begin position="195"/>
        <end position="210"/>
    </location>
</feature>
<feature type="compositionally biased region" description="Pro residues" evidence="3">
    <location>
        <begin position="253"/>
        <end position="266"/>
    </location>
</feature>
<feature type="compositionally biased region" description="Low complexity" evidence="3">
    <location>
        <begin position="267"/>
        <end position="277"/>
    </location>
</feature>
<feature type="compositionally biased region" description="Gly residues" evidence="3">
    <location>
        <begin position="279"/>
        <end position="332"/>
    </location>
</feature>
<feature type="compositionally biased region" description="Basic residues" evidence="3">
    <location>
        <begin position="349"/>
        <end position="358"/>
    </location>
</feature>
<feature type="binding site" evidence="2">
    <location>
        <begin position="479"/>
        <end position="486"/>
    </location>
    <ligand>
        <name>GTP</name>
        <dbReference type="ChEBI" id="CHEBI:37565"/>
    </ligand>
</feature>
<feature type="binding site" evidence="2">
    <location>
        <begin position="529"/>
        <end position="533"/>
    </location>
    <ligand>
        <name>GTP</name>
        <dbReference type="ChEBI" id="CHEBI:37565"/>
    </ligand>
</feature>
<feature type="binding site" evidence="2">
    <location>
        <begin position="583"/>
        <end position="586"/>
    </location>
    <ligand>
        <name>GTP</name>
        <dbReference type="ChEBI" id="CHEBI:37565"/>
    </ligand>
</feature>
<comment type="function">
    <text evidence="2">One of the essential components for the initiation of protein synthesis. Protects formylmethionyl-tRNA from spontaneous hydrolysis and promotes its binding to the 30S ribosomal subunits. Also involved in the hydrolysis of GTP during the formation of the 70S ribosomal complex.</text>
</comment>
<comment type="subcellular location">
    <subcellularLocation>
        <location evidence="2">Cytoplasm</location>
    </subcellularLocation>
</comment>
<comment type="similarity">
    <text evidence="2">Belongs to the TRAFAC class translation factor GTPase superfamily. Classic translation factor GTPase family. IF-2 subfamily.</text>
</comment>
<gene>
    <name evidence="2" type="primary">infB</name>
    <name type="ordered locus">ROP_66830</name>
</gene>